<sequence length="829" mass="93106">MKMTRRAFVKANAAASAAAVAGITLPASATNLIASSDQTAIHWDKAPCRFCGTGCSVLVGTQDGRVVATQGDPEAPVNKGLNCIKGYFLSKIMYGQDRLKTPLLRMKDGQYHKDGEFTPVSWDTAFDVMAEKWKASLKTKGPTSVGMFGSGQWTVMEGYAAVKLMKAGFRSNNIDPNARHCMASAVVGFMRTFGIDEPMGCYDDFEHADAFVLWGSNMAEMHPVLWTRITDRRLSHPHVKVNVLSTYYHRSFELADHGYIFHPQSDLAIANFIANYIIQNDAVNWDFVNKHTHFKQAVTDIGYGLRDDHPLQKKAKNANSGDVSDISFEEYKKSVAPYTVEKASEISGVSPDKLITLAKQYADPNTKVMSLWTMGMNQHTRGVWMQSLVYNLHLLTGKIATPGNSPFSLTGQPSACGTAREVGTFAHRLPADMVVANPKHRAIAEKVWKLPEGTIPEKPGFHAVQQDRMLKDGVLNCYWVQCNNNMQAGPNINEERLPGYRNPENFIVVSDAYPTVTAQAADLVLPTAMWVEKEGAYGNAERRTQVWYQQVKTVGESHSDSWQVIEFSKRFKVEDVWPEELLAKAPQYRGKTLYDVLFKNGQVDKFPLSEARELNDDAHHFGFYIQKGLFEEYAEFGRGHGHDLAPYDVYHQVRGLRWPVVDGKETKWRFKEGSDPYAKAGSGWDFYGKPDGKAWIISSPYEAPPEMPNEEYDLWLCTGRVLEHWHTGTMTRRVPELYKAVPDALCFMHHEDAQARGLRRGDEVLISNSRGEVRVRVETRGRNKPPKGLVFVPFFDARILVNKLILDATDPLSKQTDFKKCPVKITKVA</sequence>
<feature type="signal peptide" description="Tat-type signal" evidence="1">
    <location>
        <begin position="1"/>
        <end position="29"/>
    </location>
</feature>
<feature type="chain" id="PRO_0000046009" description="Periplasmic nitrate reductase" evidence="1">
    <location>
        <begin position="30"/>
        <end position="829"/>
    </location>
</feature>
<feature type="domain" description="4Fe-4S Mo/W bis-MGD-type" evidence="1">
    <location>
        <begin position="41"/>
        <end position="97"/>
    </location>
</feature>
<feature type="binding site" evidence="1">
    <location>
        <position position="48"/>
    </location>
    <ligand>
        <name>[4Fe-4S] cluster</name>
        <dbReference type="ChEBI" id="CHEBI:49883"/>
    </ligand>
</feature>
<feature type="binding site" evidence="1">
    <location>
        <position position="51"/>
    </location>
    <ligand>
        <name>[4Fe-4S] cluster</name>
        <dbReference type="ChEBI" id="CHEBI:49883"/>
    </ligand>
</feature>
<feature type="binding site" evidence="1">
    <location>
        <position position="55"/>
    </location>
    <ligand>
        <name>[4Fe-4S] cluster</name>
        <dbReference type="ChEBI" id="CHEBI:49883"/>
    </ligand>
</feature>
<feature type="binding site" evidence="1">
    <location>
        <position position="83"/>
    </location>
    <ligand>
        <name>[4Fe-4S] cluster</name>
        <dbReference type="ChEBI" id="CHEBI:49883"/>
    </ligand>
</feature>
<feature type="binding site" evidence="1">
    <location>
        <position position="85"/>
    </location>
    <ligand>
        <name>Mo-bis(molybdopterin guanine dinucleotide)</name>
        <dbReference type="ChEBI" id="CHEBI:60539"/>
    </ligand>
</feature>
<feature type="binding site" evidence="1">
    <location>
        <position position="152"/>
    </location>
    <ligand>
        <name>Mo-bis(molybdopterin guanine dinucleotide)</name>
        <dbReference type="ChEBI" id="CHEBI:60539"/>
    </ligand>
</feature>
<feature type="binding site" evidence="1">
    <location>
        <position position="177"/>
    </location>
    <ligand>
        <name>Mo-bis(molybdopterin guanine dinucleotide)</name>
        <dbReference type="ChEBI" id="CHEBI:60539"/>
    </ligand>
</feature>
<feature type="binding site" evidence="1">
    <location>
        <position position="181"/>
    </location>
    <ligand>
        <name>Mo-bis(molybdopterin guanine dinucleotide)</name>
        <dbReference type="ChEBI" id="CHEBI:60539"/>
    </ligand>
</feature>
<feature type="binding site" evidence="1">
    <location>
        <begin position="214"/>
        <end position="221"/>
    </location>
    <ligand>
        <name>Mo-bis(molybdopterin guanine dinucleotide)</name>
        <dbReference type="ChEBI" id="CHEBI:60539"/>
    </ligand>
</feature>
<feature type="binding site" evidence="1">
    <location>
        <begin position="245"/>
        <end position="249"/>
    </location>
    <ligand>
        <name>Mo-bis(molybdopterin guanine dinucleotide)</name>
        <dbReference type="ChEBI" id="CHEBI:60539"/>
    </ligand>
</feature>
<feature type="binding site" evidence="1">
    <location>
        <begin position="264"/>
        <end position="266"/>
    </location>
    <ligand>
        <name>Mo-bis(molybdopterin guanine dinucleotide)</name>
        <dbReference type="ChEBI" id="CHEBI:60539"/>
    </ligand>
</feature>
<feature type="binding site" evidence="1">
    <location>
        <position position="374"/>
    </location>
    <ligand>
        <name>Mo-bis(molybdopterin guanine dinucleotide)</name>
        <dbReference type="ChEBI" id="CHEBI:60539"/>
    </ligand>
</feature>
<feature type="binding site" evidence="1">
    <location>
        <position position="378"/>
    </location>
    <ligand>
        <name>Mo-bis(molybdopterin guanine dinucleotide)</name>
        <dbReference type="ChEBI" id="CHEBI:60539"/>
    </ligand>
</feature>
<feature type="binding site" evidence="1">
    <location>
        <position position="484"/>
    </location>
    <ligand>
        <name>Mo-bis(molybdopterin guanine dinucleotide)</name>
        <dbReference type="ChEBI" id="CHEBI:60539"/>
    </ligand>
</feature>
<feature type="binding site" evidence="1">
    <location>
        <begin position="510"/>
        <end position="511"/>
    </location>
    <ligand>
        <name>Mo-bis(molybdopterin guanine dinucleotide)</name>
        <dbReference type="ChEBI" id="CHEBI:60539"/>
    </ligand>
</feature>
<feature type="binding site" evidence="1">
    <location>
        <position position="533"/>
    </location>
    <ligand>
        <name>Mo-bis(molybdopterin guanine dinucleotide)</name>
        <dbReference type="ChEBI" id="CHEBI:60539"/>
    </ligand>
</feature>
<feature type="binding site" evidence="1">
    <location>
        <position position="560"/>
    </location>
    <ligand>
        <name>Mo-bis(molybdopterin guanine dinucleotide)</name>
        <dbReference type="ChEBI" id="CHEBI:60539"/>
    </ligand>
</feature>
<feature type="binding site" evidence="1">
    <location>
        <begin position="718"/>
        <end position="727"/>
    </location>
    <ligand>
        <name>Mo-bis(molybdopterin guanine dinucleotide)</name>
        <dbReference type="ChEBI" id="CHEBI:60539"/>
    </ligand>
</feature>
<feature type="binding site" evidence="1">
    <location>
        <position position="794"/>
    </location>
    <ligand>
        <name>substrate</name>
    </ligand>
</feature>
<feature type="binding site" evidence="1">
    <location>
        <position position="802"/>
    </location>
    <ligand>
        <name>Mo-bis(molybdopterin guanine dinucleotide)</name>
        <dbReference type="ChEBI" id="CHEBI:60539"/>
    </ligand>
</feature>
<feature type="binding site" evidence="1">
    <location>
        <position position="819"/>
    </location>
    <ligand>
        <name>Mo-bis(molybdopterin guanine dinucleotide)</name>
        <dbReference type="ChEBI" id="CHEBI:60539"/>
    </ligand>
</feature>
<accession>Q9KLR4</accession>
<keyword id="KW-0004">4Fe-4S</keyword>
<keyword id="KW-0249">Electron transport</keyword>
<keyword id="KW-0408">Iron</keyword>
<keyword id="KW-0411">Iron-sulfur</keyword>
<keyword id="KW-0479">Metal-binding</keyword>
<keyword id="KW-0500">Molybdenum</keyword>
<keyword id="KW-0534">Nitrate assimilation</keyword>
<keyword id="KW-0560">Oxidoreductase</keyword>
<keyword id="KW-0574">Periplasm</keyword>
<keyword id="KW-1185">Reference proteome</keyword>
<keyword id="KW-0732">Signal</keyword>
<keyword id="KW-0813">Transport</keyword>
<comment type="function">
    <text evidence="1">Catalytic subunit of the periplasmic nitrate reductase complex NapAB. Receives electrons from NapB and catalyzes the reduction of nitrate to nitrite.</text>
</comment>
<comment type="catalytic activity">
    <reaction evidence="1">
        <text>2 Fe(II)-[cytochrome] + nitrate + 2 H(+) = 2 Fe(III)-[cytochrome] + nitrite + H2O</text>
        <dbReference type="Rhea" id="RHEA:12909"/>
        <dbReference type="Rhea" id="RHEA-COMP:11777"/>
        <dbReference type="Rhea" id="RHEA-COMP:11778"/>
        <dbReference type="ChEBI" id="CHEBI:15377"/>
        <dbReference type="ChEBI" id="CHEBI:15378"/>
        <dbReference type="ChEBI" id="CHEBI:16301"/>
        <dbReference type="ChEBI" id="CHEBI:17632"/>
        <dbReference type="ChEBI" id="CHEBI:29033"/>
        <dbReference type="ChEBI" id="CHEBI:29034"/>
        <dbReference type="EC" id="1.9.6.1"/>
    </reaction>
</comment>
<comment type="cofactor">
    <cofactor evidence="1">
        <name>[4Fe-4S] cluster</name>
        <dbReference type="ChEBI" id="CHEBI:49883"/>
    </cofactor>
    <text evidence="1">Binds 1 [4Fe-4S] cluster.</text>
</comment>
<comment type="cofactor">
    <cofactor evidence="1">
        <name>Mo-bis(molybdopterin guanine dinucleotide)</name>
        <dbReference type="ChEBI" id="CHEBI:60539"/>
    </cofactor>
    <text evidence="1">Binds 1 molybdenum-bis(molybdopterin guanine dinucleotide) (Mo-bis-MGD) cofactor per subunit.</text>
</comment>
<comment type="subunit">
    <text evidence="1">Component of the periplasmic nitrate reductase NapAB complex composed of NapA and NapB.</text>
</comment>
<comment type="subcellular location">
    <subcellularLocation>
        <location evidence="1">Periplasm</location>
    </subcellularLocation>
</comment>
<comment type="PTM">
    <text evidence="1">Predicted to be exported by the Tat system. The position of the signal peptide cleavage has not been experimentally proven.</text>
</comment>
<comment type="similarity">
    <text evidence="1">Belongs to the prokaryotic molybdopterin-containing oxidoreductase family. NasA/NapA/NarB subfamily.</text>
</comment>
<evidence type="ECO:0000255" key="1">
    <source>
        <dbReference type="HAMAP-Rule" id="MF_01630"/>
    </source>
</evidence>
<name>NAPA_VIBCH</name>
<proteinExistence type="inferred from homology"/>
<organism>
    <name type="scientific">Vibrio cholerae serotype O1 (strain ATCC 39315 / El Tor Inaba N16961)</name>
    <dbReference type="NCBI Taxonomy" id="243277"/>
    <lineage>
        <taxon>Bacteria</taxon>
        <taxon>Pseudomonadati</taxon>
        <taxon>Pseudomonadota</taxon>
        <taxon>Gammaproteobacteria</taxon>
        <taxon>Vibrionales</taxon>
        <taxon>Vibrionaceae</taxon>
        <taxon>Vibrio</taxon>
    </lineage>
</organism>
<dbReference type="EC" id="1.9.6.1" evidence="1"/>
<dbReference type="EMBL" id="AE003853">
    <property type="protein sequence ID" value="AAF96578.1"/>
    <property type="molecule type" value="Genomic_DNA"/>
</dbReference>
<dbReference type="PIR" id="D82430">
    <property type="entry name" value="D82430"/>
</dbReference>
<dbReference type="RefSeq" id="NP_233066.1">
    <property type="nucleotide sequence ID" value="NC_002506.1"/>
</dbReference>
<dbReference type="RefSeq" id="WP_000784576.1">
    <property type="nucleotide sequence ID" value="NZ_LT906615.1"/>
</dbReference>
<dbReference type="SMR" id="Q9KLR4"/>
<dbReference type="STRING" id="243277.VC_A0678"/>
<dbReference type="DNASU" id="2612423"/>
<dbReference type="EnsemblBacteria" id="AAF96578">
    <property type="protein sequence ID" value="AAF96578"/>
    <property type="gene ID" value="VC_A0678"/>
</dbReference>
<dbReference type="KEGG" id="vch:VC_A0678"/>
<dbReference type="PATRIC" id="fig|243277.26.peg.3302"/>
<dbReference type="eggNOG" id="COG0243">
    <property type="taxonomic scope" value="Bacteria"/>
</dbReference>
<dbReference type="HOGENOM" id="CLU_000422_13_4_6"/>
<dbReference type="Proteomes" id="UP000000584">
    <property type="component" value="Chromosome 2"/>
</dbReference>
<dbReference type="GO" id="GO:0016020">
    <property type="term" value="C:membrane"/>
    <property type="evidence" value="ECO:0000318"/>
    <property type="project" value="GO_Central"/>
</dbReference>
<dbReference type="GO" id="GO:0009325">
    <property type="term" value="C:nitrate reductase complex"/>
    <property type="evidence" value="ECO:0000318"/>
    <property type="project" value="GO_Central"/>
</dbReference>
<dbReference type="GO" id="GO:0042597">
    <property type="term" value="C:periplasmic space"/>
    <property type="evidence" value="ECO:0007669"/>
    <property type="project" value="UniProtKB-SubCell"/>
</dbReference>
<dbReference type="GO" id="GO:0051539">
    <property type="term" value="F:4 iron, 4 sulfur cluster binding"/>
    <property type="evidence" value="ECO:0007669"/>
    <property type="project" value="UniProtKB-KW"/>
</dbReference>
<dbReference type="GO" id="GO:0009055">
    <property type="term" value="F:electron transfer activity"/>
    <property type="evidence" value="ECO:0007669"/>
    <property type="project" value="UniProtKB-UniRule"/>
</dbReference>
<dbReference type="GO" id="GO:0005506">
    <property type="term" value="F:iron ion binding"/>
    <property type="evidence" value="ECO:0007669"/>
    <property type="project" value="UniProtKB-UniRule"/>
</dbReference>
<dbReference type="GO" id="GO:0030151">
    <property type="term" value="F:molybdenum ion binding"/>
    <property type="evidence" value="ECO:0000318"/>
    <property type="project" value="GO_Central"/>
</dbReference>
<dbReference type="GO" id="GO:0043546">
    <property type="term" value="F:molybdopterin cofactor binding"/>
    <property type="evidence" value="ECO:0007669"/>
    <property type="project" value="InterPro"/>
</dbReference>
<dbReference type="GO" id="GO:0050140">
    <property type="term" value="F:nitrate reductase (cytochrome) activity"/>
    <property type="evidence" value="ECO:0007669"/>
    <property type="project" value="UniProtKB-EC"/>
</dbReference>
<dbReference type="GO" id="GO:0008940">
    <property type="term" value="F:nitrate reductase activity"/>
    <property type="evidence" value="ECO:0000318"/>
    <property type="project" value="GO_Central"/>
</dbReference>
<dbReference type="GO" id="GO:0045333">
    <property type="term" value="P:cellular respiration"/>
    <property type="evidence" value="ECO:0007669"/>
    <property type="project" value="UniProtKB-ARBA"/>
</dbReference>
<dbReference type="GO" id="GO:0006777">
    <property type="term" value="P:Mo-molybdopterin cofactor biosynthetic process"/>
    <property type="evidence" value="ECO:0007669"/>
    <property type="project" value="UniProtKB-UniRule"/>
</dbReference>
<dbReference type="GO" id="GO:0042128">
    <property type="term" value="P:nitrate assimilation"/>
    <property type="evidence" value="ECO:0007669"/>
    <property type="project" value="UniProtKB-UniRule"/>
</dbReference>
<dbReference type="CDD" id="cd02791">
    <property type="entry name" value="MopB_CT_Nitrate-R-NapA-like"/>
    <property type="match status" value="1"/>
</dbReference>
<dbReference type="CDD" id="cd02754">
    <property type="entry name" value="MopB_Nitrate-R-NapA-like"/>
    <property type="match status" value="1"/>
</dbReference>
<dbReference type="FunFam" id="2.40.40.20:FF:000005">
    <property type="entry name" value="Periplasmic nitrate reductase"/>
    <property type="match status" value="1"/>
</dbReference>
<dbReference type="Gene3D" id="2.40.40.20">
    <property type="match status" value="1"/>
</dbReference>
<dbReference type="Gene3D" id="3.30.200.210">
    <property type="match status" value="1"/>
</dbReference>
<dbReference type="Gene3D" id="3.40.50.740">
    <property type="match status" value="1"/>
</dbReference>
<dbReference type="Gene3D" id="3.40.228.10">
    <property type="entry name" value="Dimethylsulfoxide Reductase, domain 2"/>
    <property type="match status" value="1"/>
</dbReference>
<dbReference type="HAMAP" id="MF_01630">
    <property type="entry name" value="Nitrate_reduct_NapA"/>
    <property type="match status" value="1"/>
</dbReference>
<dbReference type="InterPro" id="IPR009010">
    <property type="entry name" value="Asp_de-COase-like_dom_sf"/>
</dbReference>
<dbReference type="InterPro" id="IPR041957">
    <property type="entry name" value="CT_Nitrate-R-NapA-like"/>
</dbReference>
<dbReference type="InterPro" id="IPR006657">
    <property type="entry name" value="MoPterin_dinucl-bd_dom"/>
</dbReference>
<dbReference type="InterPro" id="IPR006656">
    <property type="entry name" value="Mopterin_OxRdtase"/>
</dbReference>
<dbReference type="InterPro" id="IPR006963">
    <property type="entry name" value="Mopterin_OxRdtase_4Fe-4S_dom"/>
</dbReference>
<dbReference type="InterPro" id="IPR027467">
    <property type="entry name" value="MopterinOxRdtase_cofactor_BS"/>
</dbReference>
<dbReference type="InterPro" id="IPR010051">
    <property type="entry name" value="Periplasm_NO3_reductase_lsu"/>
</dbReference>
<dbReference type="InterPro" id="IPR050123">
    <property type="entry name" value="Prok_molybdopt-oxidoreductase"/>
</dbReference>
<dbReference type="InterPro" id="IPR006311">
    <property type="entry name" value="TAT_signal"/>
</dbReference>
<dbReference type="NCBIfam" id="TIGR01706">
    <property type="entry name" value="NAPA"/>
    <property type="match status" value="1"/>
</dbReference>
<dbReference type="NCBIfam" id="NF010055">
    <property type="entry name" value="PRK13532.1"/>
    <property type="match status" value="1"/>
</dbReference>
<dbReference type="PANTHER" id="PTHR43105:SF11">
    <property type="entry name" value="PERIPLASMIC NITRATE REDUCTASE"/>
    <property type="match status" value="1"/>
</dbReference>
<dbReference type="PANTHER" id="PTHR43105">
    <property type="entry name" value="RESPIRATORY NITRATE REDUCTASE"/>
    <property type="match status" value="1"/>
</dbReference>
<dbReference type="Pfam" id="PF04879">
    <property type="entry name" value="Molybdop_Fe4S4"/>
    <property type="match status" value="1"/>
</dbReference>
<dbReference type="Pfam" id="PF00384">
    <property type="entry name" value="Molybdopterin"/>
    <property type="match status" value="1"/>
</dbReference>
<dbReference type="Pfam" id="PF01568">
    <property type="entry name" value="Molydop_binding"/>
    <property type="match status" value="1"/>
</dbReference>
<dbReference type="SMART" id="SM00926">
    <property type="entry name" value="Molybdop_Fe4S4"/>
    <property type="match status" value="1"/>
</dbReference>
<dbReference type="SUPFAM" id="SSF50692">
    <property type="entry name" value="ADC-like"/>
    <property type="match status" value="1"/>
</dbReference>
<dbReference type="SUPFAM" id="SSF53706">
    <property type="entry name" value="Formate dehydrogenase/DMSO reductase, domains 1-3"/>
    <property type="match status" value="1"/>
</dbReference>
<dbReference type="PROSITE" id="PS51669">
    <property type="entry name" value="4FE4S_MOW_BIS_MGD"/>
    <property type="match status" value="1"/>
</dbReference>
<dbReference type="PROSITE" id="PS00551">
    <property type="entry name" value="MOLYBDOPTERIN_PROK_1"/>
    <property type="match status" value="1"/>
</dbReference>
<dbReference type="PROSITE" id="PS51318">
    <property type="entry name" value="TAT"/>
    <property type="match status" value="1"/>
</dbReference>
<gene>
    <name evidence="1" type="primary">napA</name>
    <name type="ordered locus">VC_A0678</name>
</gene>
<reference key="1">
    <citation type="journal article" date="2000" name="Nature">
        <title>DNA sequence of both chromosomes of the cholera pathogen Vibrio cholerae.</title>
        <authorList>
            <person name="Heidelberg J.F."/>
            <person name="Eisen J.A."/>
            <person name="Nelson W.C."/>
            <person name="Clayton R.A."/>
            <person name="Gwinn M.L."/>
            <person name="Dodson R.J."/>
            <person name="Haft D.H."/>
            <person name="Hickey E.K."/>
            <person name="Peterson J.D."/>
            <person name="Umayam L.A."/>
            <person name="Gill S.R."/>
            <person name="Nelson K.E."/>
            <person name="Read T.D."/>
            <person name="Tettelin H."/>
            <person name="Richardson D.L."/>
            <person name="Ermolaeva M.D."/>
            <person name="Vamathevan J.J."/>
            <person name="Bass S."/>
            <person name="Qin H."/>
            <person name="Dragoi I."/>
            <person name="Sellers P."/>
            <person name="McDonald L.A."/>
            <person name="Utterback T.R."/>
            <person name="Fleischmann R.D."/>
            <person name="Nierman W.C."/>
            <person name="White O."/>
            <person name="Salzberg S.L."/>
            <person name="Smith H.O."/>
            <person name="Colwell R.R."/>
            <person name="Mekalanos J.J."/>
            <person name="Venter J.C."/>
            <person name="Fraser C.M."/>
        </authorList>
    </citation>
    <scope>NUCLEOTIDE SEQUENCE [LARGE SCALE GENOMIC DNA]</scope>
    <source>
        <strain>ATCC 39315 / El Tor Inaba N16961</strain>
    </source>
</reference>
<protein>
    <recommendedName>
        <fullName evidence="1">Periplasmic nitrate reductase</fullName>
        <ecNumber evidence="1">1.9.6.1</ecNumber>
    </recommendedName>
</protein>